<reference key="1">
    <citation type="journal article" date="2001" name="Eur. J. Immunol.">
        <title>Identification, molecular cloning and functional characterization of NKp46 and NKp30 natural cytotoxicity receptors in Macaca fascicularis NK cells.</title>
        <authorList>
            <person name="De Maria A."/>
            <person name="Biassoni R."/>
            <person name="Fogli M."/>
            <person name="Rizzi M."/>
            <person name="Cantoni C."/>
            <person name="Costa P."/>
            <person name="Conte R."/>
            <person name="Mavilio D."/>
            <person name="Ensoli B."/>
            <person name="Cafaro A."/>
            <person name="Moretta A."/>
            <person name="Moretta L."/>
        </authorList>
    </citation>
    <scope>NUCLEOTIDE SEQUENCE [MRNA]</scope>
    <scope>TISSUE SPECIFICITY</scope>
    <source>
        <tissue>Lymphoid tissue</tissue>
    </source>
</reference>
<protein>
    <recommendedName>
        <fullName>Natural cytotoxicity triggering receptor 1</fullName>
    </recommendedName>
    <alternativeName>
        <fullName>Natural killer cell p46-related protein</fullName>
        <shortName>NK-p46</shortName>
        <shortName>NKp46</shortName>
    </alternativeName>
    <cdAntigenName>CD335</cdAntigenName>
</protein>
<proteinExistence type="evidence at transcript level"/>
<accession>Q95JB9</accession>
<organism>
    <name type="scientific">Macaca fascicularis</name>
    <name type="common">Crab-eating macaque</name>
    <name type="synonym">Cynomolgus monkey</name>
    <dbReference type="NCBI Taxonomy" id="9541"/>
    <lineage>
        <taxon>Eukaryota</taxon>
        <taxon>Metazoa</taxon>
        <taxon>Chordata</taxon>
        <taxon>Craniata</taxon>
        <taxon>Vertebrata</taxon>
        <taxon>Euteleostomi</taxon>
        <taxon>Mammalia</taxon>
        <taxon>Eutheria</taxon>
        <taxon>Euarchontoglires</taxon>
        <taxon>Primates</taxon>
        <taxon>Haplorrhini</taxon>
        <taxon>Catarrhini</taxon>
        <taxon>Cercopithecidae</taxon>
        <taxon>Cercopithecinae</taxon>
        <taxon>Macaca</taxon>
    </lineage>
</organism>
<comment type="function">
    <text evidence="1">Cytotoxicity-activating receptor that may contribute to the increased efficiency of activated natural killer (NK) cells to mediate tumor cell lysis.</text>
</comment>
<comment type="subunit">
    <text evidence="1">Interacts with CD3Z and FCER1G.</text>
</comment>
<comment type="subcellular location">
    <subcellularLocation>
        <location evidence="5">Cell membrane</location>
        <topology evidence="5">Single-pass type I membrane protein</topology>
    </subcellularLocation>
</comment>
<comment type="tissue specificity">
    <text evidence="4">Expressed in NK cells.</text>
</comment>
<comment type="similarity">
    <text evidence="5">Belongs to the natural cytotoxicity receptor (NCR) family.</text>
</comment>
<dbReference type="EMBL" id="AJ278288">
    <property type="protein sequence ID" value="CAC41080.1"/>
    <property type="molecule type" value="mRNA"/>
</dbReference>
<dbReference type="RefSeq" id="NP_001271509.1">
    <property type="nucleotide sequence ID" value="NM_001284580.1"/>
</dbReference>
<dbReference type="SMR" id="Q95JB9"/>
<dbReference type="STRING" id="9541.ENSMFAP00000025284"/>
<dbReference type="GlyCosmos" id="Q95JB9">
    <property type="glycosylation" value="1 site, No reported glycans"/>
</dbReference>
<dbReference type="ABCD" id="Q95JB9">
    <property type="antibodies" value="1 sequenced antibody"/>
</dbReference>
<dbReference type="eggNOG" id="ENOG502RWVC">
    <property type="taxonomic scope" value="Eukaryota"/>
</dbReference>
<dbReference type="Proteomes" id="UP000233100">
    <property type="component" value="Unplaced"/>
</dbReference>
<dbReference type="GO" id="GO:0005886">
    <property type="term" value="C:plasma membrane"/>
    <property type="evidence" value="ECO:0007669"/>
    <property type="project" value="UniProtKB-SubCell"/>
</dbReference>
<dbReference type="GO" id="GO:0002764">
    <property type="term" value="P:immune response-regulating signaling pathway"/>
    <property type="evidence" value="ECO:0007669"/>
    <property type="project" value="TreeGrafter"/>
</dbReference>
<dbReference type="CDD" id="cd05751">
    <property type="entry name" value="IgC2_D1_LILR_KIR_like"/>
    <property type="match status" value="1"/>
</dbReference>
<dbReference type="CDD" id="cd05711">
    <property type="entry name" value="IgC2_D2_LILR_KIR_like"/>
    <property type="match status" value="1"/>
</dbReference>
<dbReference type="FunFam" id="2.60.40.10:FF:000049">
    <property type="entry name" value="Leukocyte immunoglobulin-like receptor subfamily B member 1"/>
    <property type="match status" value="1"/>
</dbReference>
<dbReference type="FunFam" id="2.60.40.10:FF:001157">
    <property type="entry name" value="Natural cytotoxicity triggering receptor 1"/>
    <property type="match status" value="1"/>
</dbReference>
<dbReference type="Gene3D" id="2.60.40.10">
    <property type="entry name" value="Immunoglobulins"/>
    <property type="match status" value="2"/>
</dbReference>
<dbReference type="InterPro" id="IPR036179">
    <property type="entry name" value="Ig-like_dom_sf"/>
</dbReference>
<dbReference type="InterPro" id="IPR013783">
    <property type="entry name" value="Ig-like_fold"/>
</dbReference>
<dbReference type="InterPro" id="IPR050412">
    <property type="entry name" value="Ig-like_Receptors_ImmuneReg"/>
</dbReference>
<dbReference type="InterPro" id="IPR003599">
    <property type="entry name" value="Ig_sub"/>
</dbReference>
<dbReference type="PANTHER" id="PTHR11738">
    <property type="entry name" value="MHC CLASS I NK CELL RECEPTOR"/>
    <property type="match status" value="1"/>
</dbReference>
<dbReference type="PANTHER" id="PTHR11738:SF14">
    <property type="entry name" value="NATURAL CYTOTOXICITY TRIGGERING RECEPTOR 1"/>
    <property type="match status" value="1"/>
</dbReference>
<dbReference type="Pfam" id="PF13895">
    <property type="entry name" value="Ig_2"/>
    <property type="match status" value="1"/>
</dbReference>
<dbReference type="SMART" id="SM00409">
    <property type="entry name" value="IG"/>
    <property type="match status" value="2"/>
</dbReference>
<dbReference type="SUPFAM" id="SSF48726">
    <property type="entry name" value="Immunoglobulin"/>
    <property type="match status" value="2"/>
</dbReference>
<sequence length="306" mass="34652">MSSTLRALLCLGLCLSQRISAPKQTLPKPIIRAESTYMVPKEKQATLCCQGSYGAVEYQLHFEGSLFAVERPKPPERINGVKFHIPDMNSRKAGRYSCIYRVGELWSERSDLLDLVVTEMYDTPTLSVHPGPEVTSGEKVTFYCRLDTATSMFLLLKEGRSRDVQRSYGKVQAEFPMGPVTTAHRGSYRCFGSYNNYAWSFPSEPVKLLVTGDIENTSLAPTDPTFPDSWDTCLLTRETGLQKDLALWDHTAQNLLRMGLAFLVLVALVCLLVEDWLSRKRTREQASRASTWEGRRRLNKHKDSEE</sequence>
<evidence type="ECO:0000250" key="1"/>
<evidence type="ECO:0000250" key="2">
    <source>
        <dbReference type="UniProtKB" id="O76036"/>
    </source>
</evidence>
<evidence type="ECO:0000255" key="3"/>
<evidence type="ECO:0000269" key="4">
    <source>
    </source>
</evidence>
<evidence type="ECO:0000305" key="5"/>
<keyword id="KW-1003">Cell membrane</keyword>
<keyword id="KW-1015">Disulfide bond</keyword>
<keyword id="KW-0325">Glycoprotein</keyword>
<keyword id="KW-0393">Immunoglobulin domain</keyword>
<keyword id="KW-0472">Membrane</keyword>
<keyword id="KW-0675">Receptor</keyword>
<keyword id="KW-1185">Reference proteome</keyword>
<keyword id="KW-0677">Repeat</keyword>
<keyword id="KW-0732">Signal</keyword>
<keyword id="KW-0812">Transmembrane</keyword>
<keyword id="KW-1133">Transmembrane helix</keyword>
<feature type="signal peptide" evidence="3">
    <location>
        <begin position="1"/>
        <end position="21"/>
    </location>
</feature>
<feature type="chain" id="PRO_0000015028" description="Natural cytotoxicity triggering receptor 1">
    <location>
        <begin position="22"/>
        <end position="306"/>
    </location>
</feature>
<feature type="topological domain" description="Extracellular" evidence="3">
    <location>
        <begin position="22"/>
        <end position="257"/>
    </location>
</feature>
<feature type="transmembrane region" description="Helical" evidence="3">
    <location>
        <begin position="258"/>
        <end position="278"/>
    </location>
</feature>
<feature type="topological domain" description="Cytoplasmic" evidence="3">
    <location>
        <begin position="279"/>
        <end position="306"/>
    </location>
</feature>
<feature type="domain" description="Ig-like 1">
    <location>
        <begin position="42"/>
        <end position="100"/>
    </location>
</feature>
<feature type="domain" description="Ig-like 2">
    <location>
        <begin position="137"/>
        <end position="192"/>
    </location>
</feature>
<feature type="glycosylation site" description="N-linked (GlcNAc...) asparagine" evidence="3">
    <location>
        <position position="216"/>
    </location>
</feature>
<feature type="disulfide bond" evidence="2">
    <location>
        <begin position="49"/>
        <end position="98"/>
    </location>
</feature>
<feature type="disulfide bond" evidence="2">
    <location>
        <begin position="144"/>
        <end position="190"/>
    </location>
</feature>
<name>NCTR1_MACFA</name>
<gene>
    <name type="primary">NCR1</name>
</gene>